<name>YQGF_RICB8</name>
<accession>A8GU80</accession>
<evidence type="ECO:0000255" key="1">
    <source>
        <dbReference type="HAMAP-Rule" id="MF_00651"/>
    </source>
</evidence>
<sequence>MIINNLQEFYRLLLPNAPLISIDYGSKKIGIAISNQERNIAMPLNIITEASKKAIIASLLEKIEQYKACGIVIGLPIDMSGMQTEQSAIVIKFAEELTKSINLPIYLQDERLTTKAANNFLKSFGIKRKERNNNDDAVAASMILETVLNSINKL</sequence>
<keyword id="KW-0963">Cytoplasm</keyword>
<keyword id="KW-0378">Hydrolase</keyword>
<keyword id="KW-0540">Nuclease</keyword>
<keyword id="KW-0690">Ribosome biogenesis</keyword>
<organism>
    <name type="scientific">Rickettsia bellii (strain OSU 85-389)</name>
    <dbReference type="NCBI Taxonomy" id="391896"/>
    <lineage>
        <taxon>Bacteria</taxon>
        <taxon>Pseudomonadati</taxon>
        <taxon>Pseudomonadota</taxon>
        <taxon>Alphaproteobacteria</taxon>
        <taxon>Rickettsiales</taxon>
        <taxon>Rickettsiaceae</taxon>
        <taxon>Rickettsieae</taxon>
        <taxon>Rickettsia</taxon>
        <taxon>belli group</taxon>
    </lineage>
</organism>
<gene>
    <name type="ordered locus">A1I_05165</name>
</gene>
<protein>
    <recommendedName>
        <fullName evidence="1">Putative pre-16S rRNA nuclease</fullName>
        <ecNumber evidence="1">3.1.-.-</ecNumber>
    </recommendedName>
</protein>
<feature type="chain" id="PRO_1000061562" description="Putative pre-16S rRNA nuclease">
    <location>
        <begin position="1"/>
        <end position="154"/>
    </location>
</feature>
<proteinExistence type="inferred from homology"/>
<reference key="1">
    <citation type="submission" date="2007-09" db="EMBL/GenBank/DDBJ databases">
        <title>Complete genome sequencing of Rickettsia bellii.</title>
        <authorList>
            <person name="Madan A."/>
            <person name="Lee H."/>
            <person name="Madan A."/>
            <person name="Yoon J.-G."/>
            <person name="Ryu G.-Y."/>
            <person name="Dasch G."/>
            <person name="Ereemeva M."/>
        </authorList>
    </citation>
    <scope>NUCLEOTIDE SEQUENCE [LARGE SCALE GENOMIC DNA]</scope>
    <source>
        <strain>OSU 85-389</strain>
    </source>
</reference>
<comment type="function">
    <text evidence="1">Could be a nuclease involved in processing of the 5'-end of pre-16S rRNA.</text>
</comment>
<comment type="subcellular location">
    <subcellularLocation>
        <location evidence="1">Cytoplasm</location>
    </subcellularLocation>
</comment>
<comment type="similarity">
    <text evidence="1">Belongs to the YqgF nuclease family.</text>
</comment>
<dbReference type="EC" id="3.1.-.-" evidence="1"/>
<dbReference type="EMBL" id="CP000849">
    <property type="protein sequence ID" value="ABV79362.1"/>
    <property type="molecule type" value="Genomic_DNA"/>
</dbReference>
<dbReference type="SMR" id="A8GU80"/>
<dbReference type="KEGG" id="rbo:A1I_05165"/>
<dbReference type="HOGENOM" id="CLU_098240_2_2_5"/>
<dbReference type="GO" id="GO:0005829">
    <property type="term" value="C:cytosol"/>
    <property type="evidence" value="ECO:0007669"/>
    <property type="project" value="TreeGrafter"/>
</dbReference>
<dbReference type="GO" id="GO:0004518">
    <property type="term" value="F:nuclease activity"/>
    <property type="evidence" value="ECO:0007669"/>
    <property type="project" value="UniProtKB-KW"/>
</dbReference>
<dbReference type="GO" id="GO:0000967">
    <property type="term" value="P:rRNA 5'-end processing"/>
    <property type="evidence" value="ECO:0007669"/>
    <property type="project" value="UniProtKB-UniRule"/>
</dbReference>
<dbReference type="CDD" id="cd16964">
    <property type="entry name" value="YqgF"/>
    <property type="match status" value="1"/>
</dbReference>
<dbReference type="Gene3D" id="3.30.420.140">
    <property type="entry name" value="YqgF/RNase H-like domain"/>
    <property type="match status" value="1"/>
</dbReference>
<dbReference type="HAMAP" id="MF_00651">
    <property type="entry name" value="Nuclease_YqgF"/>
    <property type="match status" value="1"/>
</dbReference>
<dbReference type="InterPro" id="IPR012337">
    <property type="entry name" value="RNaseH-like_sf"/>
</dbReference>
<dbReference type="InterPro" id="IPR005227">
    <property type="entry name" value="YqgF"/>
</dbReference>
<dbReference type="InterPro" id="IPR006641">
    <property type="entry name" value="YqgF/RNaseH-like_dom"/>
</dbReference>
<dbReference type="InterPro" id="IPR037027">
    <property type="entry name" value="YqgF/RNaseH-like_dom_sf"/>
</dbReference>
<dbReference type="NCBIfam" id="TIGR00250">
    <property type="entry name" value="RNAse_H_YqgF"/>
    <property type="match status" value="1"/>
</dbReference>
<dbReference type="PANTHER" id="PTHR33317">
    <property type="entry name" value="POLYNUCLEOTIDYL TRANSFERASE, RIBONUCLEASE H-LIKE SUPERFAMILY PROTEIN"/>
    <property type="match status" value="1"/>
</dbReference>
<dbReference type="PANTHER" id="PTHR33317:SF4">
    <property type="entry name" value="POLYNUCLEOTIDYL TRANSFERASE, RIBONUCLEASE H-LIKE SUPERFAMILY PROTEIN"/>
    <property type="match status" value="1"/>
</dbReference>
<dbReference type="Pfam" id="PF03652">
    <property type="entry name" value="RuvX"/>
    <property type="match status" value="1"/>
</dbReference>
<dbReference type="SMART" id="SM00732">
    <property type="entry name" value="YqgFc"/>
    <property type="match status" value="1"/>
</dbReference>
<dbReference type="SUPFAM" id="SSF53098">
    <property type="entry name" value="Ribonuclease H-like"/>
    <property type="match status" value="1"/>
</dbReference>